<organismHost>
    <name type="scientific">Oryctolagus cuniculus</name>
    <name type="common">Rabbit</name>
    <dbReference type="NCBI Taxonomy" id="9986"/>
</organismHost>
<sequence>MNARIADLLYNYLGRPPSLSEYHMLKLQHRNIQKIIAFNKDIFISLIKKNKKKFFSDIDLTSSEIKTSVLSYFSKQRDTYSIGKLYTIIELQTILVSTYTDVLGVLTLKGPDMFPSSTRYDIKSIKQIATSALHAMNVAVISDKVMGRHNVSPLVSNVNALMEEYLRRHNKNCICYGSYSLYLLNPEVKYGDIDILQTNSRTFLIDLAFLIKFITGSNVVLLKVPYLKNYMVLKDKDDNHIIDSFNIRQETMQVIPKVLIDNIYIVDPALQLMSMFKMFSQIDRLEDLARNPEKLTVRLATLMEYVRVKYGIILNGESNHMPMKGVLDKDKRIIDVDTSGYNFSFKKCYVYLDESSLSSDILDLNADDAVDFENVSNSAYLINGDVLYTYFSNTILLSDPDTIHEISNKAMSAHILIYQILTGNDIRQPLSDLVNSLMYNEKVLIHEVIPRDKKTGKHGIVDIEKDIITH</sequence>
<reference key="1">
    <citation type="journal article" date="1999" name="Virology">
        <title>The complete genome sequence of shope (Rabbit) fibroma virus.</title>
        <authorList>
            <person name="Willer D.O."/>
            <person name="McFadden G."/>
            <person name="Evans D.H."/>
        </authorList>
    </citation>
    <scope>NUCLEOTIDE SEQUENCE [LARGE SCALE GENOMIC DNA]</scope>
</reference>
<evidence type="ECO:0000250" key="1"/>
<evidence type="ECO:0000305" key="2"/>
<name>PAP1_RFVKA</name>
<accession>Q9Q944</accession>
<organism>
    <name type="scientific">Rabbit fibroma virus (strain Kasza)</name>
    <name type="common">RFV</name>
    <name type="synonym">Shope fibroma virus (strain Kasza)</name>
    <dbReference type="NCBI Taxonomy" id="10272"/>
    <lineage>
        <taxon>Viruses</taxon>
        <taxon>Varidnaviria</taxon>
        <taxon>Bamfordvirae</taxon>
        <taxon>Nucleocytoviricota</taxon>
        <taxon>Pokkesviricetes</taxon>
        <taxon>Chitovirales</taxon>
        <taxon>Poxviridae</taxon>
        <taxon>Chordopoxvirinae</taxon>
        <taxon>Leporipoxvirus</taxon>
        <taxon>Rabbit fibroma virus</taxon>
    </lineage>
</organism>
<dbReference type="EC" id="2.7.7.19"/>
<dbReference type="EMBL" id="AF170722">
    <property type="protein sequence ID" value="AAF17910.1"/>
    <property type="molecule type" value="Genomic_DNA"/>
</dbReference>
<dbReference type="RefSeq" id="NP_051916.1">
    <property type="nucleotide sequence ID" value="NC_001266.1"/>
</dbReference>
<dbReference type="SMR" id="Q9Q944"/>
<dbReference type="KEGG" id="vg:1486871"/>
<dbReference type="Proteomes" id="UP000000868">
    <property type="component" value="Segment"/>
</dbReference>
<dbReference type="GO" id="GO:0005524">
    <property type="term" value="F:ATP binding"/>
    <property type="evidence" value="ECO:0007669"/>
    <property type="project" value="UniProtKB-KW"/>
</dbReference>
<dbReference type="GO" id="GO:1990817">
    <property type="term" value="F:poly(A) RNA polymerase activity"/>
    <property type="evidence" value="ECO:0007669"/>
    <property type="project" value="UniProtKB-EC"/>
</dbReference>
<dbReference type="GO" id="GO:0006397">
    <property type="term" value="P:mRNA processing"/>
    <property type="evidence" value="ECO:0007669"/>
    <property type="project" value="UniProtKB-KW"/>
</dbReference>
<dbReference type="CDD" id="cd20919">
    <property type="entry name" value="polyA_pol_Pox"/>
    <property type="match status" value="1"/>
</dbReference>
<dbReference type="Gene3D" id="1.20.1270.320">
    <property type="entry name" value="Poxvirus poly(A) polymerase, N domain"/>
    <property type="match status" value="1"/>
</dbReference>
<dbReference type="Gene3D" id="3.30.460.60">
    <property type="entry name" value="Poxvirus poly(A) polymerase, nucleotidyltransferase domain"/>
    <property type="match status" value="1"/>
</dbReference>
<dbReference type="InterPro" id="IPR004976">
    <property type="entry name" value="PolyA_pol_cat_Poxvir"/>
</dbReference>
<dbReference type="InterPro" id="IPR037265">
    <property type="entry name" value="PolyA_pol_cat_sf"/>
</dbReference>
<dbReference type="InterPro" id="IPR024231">
    <property type="entry name" value="PolyA_pol_nucTrfase_Poxvir"/>
</dbReference>
<dbReference type="InterPro" id="IPR038419">
    <property type="entry name" value="PolyA_pol_nucTrfase_sf_Poxvir"/>
</dbReference>
<dbReference type="InterPro" id="IPR024397">
    <property type="entry name" value="Poxvirus_polyA_pol_cat_C"/>
</dbReference>
<dbReference type="InterPro" id="IPR024398">
    <property type="entry name" value="Poxvirus_polyA_pol_cat_N"/>
</dbReference>
<dbReference type="InterPro" id="IPR038337">
    <property type="entry name" value="Poxvirus_polyA_pol_cat_N_sf"/>
</dbReference>
<dbReference type="Pfam" id="PF03296">
    <property type="entry name" value="Pox_polyA_pol"/>
    <property type="match status" value="1"/>
</dbReference>
<dbReference type="Pfam" id="PF12629">
    <property type="entry name" value="Pox_polyA_pol_C"/>
    <property type="match status" value="1"/>
</dbReference>
<dbReference type="Pfam" id="PF12630">
    <property type="entry name" value="Pox_polyA_pol_N"/>
    <property type="match status" value="1"/>
</dbReference>
<dbReference type="PIRSF" id="PIRSF015693">
    <property type="entry name" value="VAC-48L_nuct"/>
    <property type="match status" value="1"/>
</dbReference>
<dbReference type="SUPFAM" id="SSF160957">
    <property type="entry name" value="Poly(A) polymerase catalytic subunit-like"/>
    <property type="match status" value="1"/>
</dbReference>
<feature type="chain" id="PRO_0000308939" description="Poly(A) polymerase catalytic subunit">
    <location>
        <begin position="1"/>
        <end position="470"/>
    </location>
</feature>
<feature type="active site" evidence="1">
    <location>
        <position position="192"/>
    </location>
</feature>
<feature type="active site" evidence="1">
    <location>
        <position position="194"/>
    </location>
</feature>
<protein>
    <recommendedName>
        <fullName>Poly(A) polymerase catalytic subunit</fullName>
        <ecNumber>2.7.7.19</ecNumber>
    </recommendedName>
    <alternativeName>
        <fullName>Poly(A) polymerase large subunit</fullName>
        <shortName>PAP-L</shortName>
    </alternativeName>
</protein>
<gene>
    <name type="primary">PAPL</name>
    <name type="ordered locus">s027L</name>
</gene>
<keyword id="KW-0067">ATP-binding</keyword>
<keyword id="KW-0507">mRNA processing</keyword>
<keyword id="KW-0547">Nucleotide-binding</keyword>
<keyword id="KW-1185">Reference proteome</keyword>
<keyword id="KW-0804">Transcription</keyword>
<keyword id="KW-0808">Transferase</keyword>
<comment type="function">
    <text>Polymerase that creates the 3'-poly(A) tail of mRNA's.</text>
</comment>
<comment type="catalytic activity">
    <reaction>
        <text>RNA(n) + ATP = RNA(n)-3'-adenine ribonucleotide + diphosphate</text>
        <dbReference type="Rhea" id="RHEA:11332"/>
        <dbReference type="Rhea" id="RHEA-COMP:14527"/>
        <dbReference type="Rhea" id="RHEA-COMP:17347"/>
        <dbReference type="ChEBI" id="CHEBI:30616"/>
        <dbReference type="ChEBI" id="CHEBI:33019"/>
        <dbReference type="ChEBI" id="CHEBI:140395"/>
        <dbReference type="ChEBI" id="CHEBI:173115"/>
        <dbReference type="EC" id="2.7.7.19"/>
    </reaction>
</comment>
<comment type="subunit">
    <text evidence="1">Heterodimer of a large (catalytic) subunit and a small (regulatory) subunit.</text>
</comment>
<comment type="similarity">
    <text evidence="2">Belongs to the poxviridae poly(A) polymerase catalytic subunit family.</text>
</comment>
<proteinExistence type="inferred from homology"/>